<accession>P53645</accession>
<evidence type="ECO:0000250" key="1"/>
<evidence type="ECO:0000305" key="2"/>
<protein>
    <recommendedName>
        <fullName>Superoxide dismutase [Mn]</fullName>
        <ecNumber>1.15.1.1</ecNumber>
    </recommendedName>
</protein>
<reference key="1">
    <citation type="journal article" date="1995" name="Clin. Mol. Pathol.">
        <title>Rapid identification of mycobacteria from AIDS patients by capillary electrophoretic profiling of amplified SOD gene.</title>
        <authorList>
            <person name="Bull T.J."/>
            <person name="Shanson D.C."/>
            <person name="Archard L.C."/>
        </authorList>
    </citation>
    <scope>NUCLEOTIDE SEQUENCE [GENOMIC DNA]</scope>
    <source>
        <strain>ATCC 29571 / DSM 44163 / CCUG 37761 / JCM 13391 / NCTC 11298 / Mo 816</strain>
    </source>
</reference>
<sequence length="138" mass="15046">HHSKHHAAYVKGVNDAVAKLEEARAKDDHSAIFLNEKNLAFHLGGHVNHSIWWKNLSPNGGDKPTGDLASAIDDAFGSFDKFRAQFSAAANGLQGSGWAVLGYDSLGDKLLTFQLYDQQANVPLGIIPLLQVDMWEHA</sequence>
<feature type="chain" id="PRO_0000160054" description="Superoxide dismutase [Mn]">
    <location>
        <begin position="1" status="less than"/>
        <end position="138" status="greater than"/>
    </location>
</feature>
<feature type="binding site" evidence="1">
    <location>
        <position position="1"/>
    </location>
    <ligand>
        <name>Mn(2+)</name>
        <dbReference type="ChEBI" id="CHEBI:29035"/>
    </ligand>
</feature>
<feature type="binding site" evidence="1">
    <location>
        <position position="49"/>
    </location>
    <ligand>
        <name>Mn(2+)</name>
        <dbReference type="ChEBI" id="CHEBI:29035"/>
    </ligand>
</feature>
<feature type="binding site" evidence="1">
    <location>
        <position position="133"/>
    </location>
    <ligand>
        <name>Mn(2+)</name>
        <dbReference type="ChEBI" id="CHEBI:29035"/>
    </ligand>
</feature>
<feature type="binding site" evidence="1">
    <location>
        <position position="137"/>
    </location>
    <ligand>
        <name>Mn(2+)</name>
        <dbReference type="ChEBI" id="CHEBI:29035"/>
    </ligand>
</feature>
<feature type="non-terminal residue">
    <location>
        <position position="1"/>
    </location>
</feature>
<feature type="non-terminal residue">
    <location>
        <position position="138"/>
    </location>
</feature>
<name>SODM_MYCMA</name>
<gene>
    <name type="primary">sodA</name>
    <name type="synonym">sod</name>
</gene>
<organism>
    <name type="scientific">Mycobacterium malmoense</name>
    <dbReference type="NCBI Taxonomy" id="1780"/>
    <lineage>
        <taxon>Bacteria</taxon>
        <taxon>Bacillati</taxon>
        <taxon>Actinomycetota</taxon>
        <taxon>Actinomycetes</taxon>
        <taxon>Mycobacteriales</taxon>
        <taxon>Mycobacteriaceae</taxon>
        <taxon>Mycobacterium</taxon>
    </lineage>
</organism>
<dbReference type="EC" id="1.15.1.1"/>
<dbReference type="EMBL" id="Z48210">
    <property type="protein sequence ID" value="CAA88243.1"/>
    <property type="molecule type" value="Genomic_DNA"/>
</dbReference>
<dbReference type="PIR" id="S52364">
    <property type="entry name" value="S52364"/>
</dbReference>
<dbReference type="SMR" id="P53645"/>
<dbReference type="STRING" id="1780.A5676_26495"/>
<dbReference type="GO" id="GO:0046872">
    <property type="term" value="F:metal ion binding"/>
    <property type="evidence" value="ECO:0007669"/>
    <property type="project" value="UniProtKB-KW"/>
</dbReference>
<dbReference type="GO" id="GO:0004784">
    <property type="term" value="F:superoxide dismutase activity"/>
    <property type="evidence" value="ECO:0007669"/>
    <property type="project" value="UniProtKB-EC"/>
</dbReference>
<dbReference type="FunFam" id="1.10.287.990:FF:000001">
    <property type="entry name" value="Superoxide dismutase"/>
    <property type="match status" value="1"/>
</dbReference>
<dbReference type="Gene3D" id="1.10.287.990">
    <property type="entry name" value="Fe,Mn superoxide dismutase (SOD) domain"/>
    <property type="match status" value="1"/>
</dbReference>
<dbReference type="Gene3D" id="3.55.40.20">
    <property type="entry name" value="Iron/manganese superoxide dismutase, C-terminal domain"/>
    <property type="match status" value="1"/>
</dbReference>
<dbReference type="InterPro" id="IPR050265">
    <property type="entry name" value="Fe/Mn_Superoxide_Dismutase"/>
</dbReference>
<dbReference type="InterPro" id="IPR001189">
    <property type="entry name" value="Mn/Fe_SOD"/>
</dbReference>
<dbReference type="InterPro" id="IPR019832">
    <property type="entry name" value="Mn/Fe_SOD_C"/>
</dbReference>
<dbReference type="InterPro" id="IPR019831">
    <property type="entry name" value="Mn/Fe_SOD_N"/>
</dbReference>
<dbReference type="InterPro" id="IPR036324">
    <property type="entry name" value="Mn/Fe_SOD_N_sf"/>
</dbReference>
<dbReference type="InterPro" id="IPR036314">
    <property type="entry name" value="SOD_C_sf"/>
</dbReference>
<dbReference type="PANTHER" id="PTHR11404">
    <property type="entry name" value="SUPEROXIDE DISMUTASE 2"/>
    <property type="match status" value="1"/>
</dbReference>
<dbReference type="PANTHER" id="PTHR11404:SF6">
    <property type="entry name" value="SUPEROXIDE DISMUTASE [MN], MITOCHONDRIAL"/>
    <property type="match status" value="1"/>
</dbReference>
<dbReference type="Pfam" id="PF02777">
    <property type="entry name" value="Sod_Fe_C"/>
    <property type="match status" value="1"/>
</dbReference>
<dbReference type="Pfam" id="PF00081">
    <property type="entry name" value="Sod_Fe_N"/>
    <property type="match status" value="1"/>
</dbReference>
<dbReference type="PRINTS" id="PR01703">
    <property type="entry name" value="MNSODISMTASE"/>
</dbReference>
<dbReference type="SUPFAM" id="SSF54719">
    <property type="entry name" value="Fe,Mn superoxide dismutase (SOD), C-terminal domain"/>
    <property type="match status" value="1"/>
</dbReference>
<dbReference type="SUPFAM" id="SSF46609">
    <property type="entry name" value="Fe,Mn superoxide dismutase (SOD), N-terminal domain"/>
    <property type="match status" value="1"/>
</dbReference>
<comment type="function">
    <text>Destroys superoxide anion radicals which are normally produced within the cells and which are toxic to biological systems.</text>
</comment>
<comment type="catalytic activity">
    <reaction>
        <text>2 superoxide + 2 H(+) = H2O2 + O2</text>
        <dbReference type="Rhea" id="RHEA:20696"/>
        <dbReference type="ChEBI" id="CHEBI:15378"/>
        <dbReference type="ChEBI" id="CHEBI:15379"/>
        <dbReference type="ChEBI" id="CHEBI:16240"/>
        <dbReference type="ChEBI" id="CHEBI:18421"/>
        <dbReference type="EC" id="1.15.1.1"/>
    </reaction>
</comment>
<comment type="cofactor">
    <cofactor evidence="1">
        <name>Mn(2+)</name>
        <dbReference type="ChEBI" id="CHEBI:29035"/>
    </cofactor>
    <text evidence="1">Binds 1 Mn(2+) ion per subunit.</text>
</comment>
<comment type="similarity">
    <text evidence="2">Belongs to the iron/manganese superoxide dismutase family.</text>
</comment>
<proteinExistence type="inferred from homology"/>
<keyword id="KW-0464">Manganese</keyword>
<keyword id="KW-0479">Metal-binding</keyword>
<keyword id="KW-0560">Oxidoreductase</keyword>